<protein>
    <recommendedName>
        <fullName evidence="1">Large ribosomal subunit protein bL36c</fullName>
    </recommendedName>
    <alternativeName>
        <fullName evidence="2">50S ribosomal protein L36, chloroplastic</fullName>
    </alternativeName>
</protein>
<proteinExistence type="inferred from homology"/>
<feature type="chain" id="PRO_0000344747" description="Large ribosomal subunit protein bL36c">
    <location>
        <begin position="1"/>
        <end position="37"/>
    </location>
</feature>
<reference key="1">
    <citation type="journal article" date="2008" name="Nature">
        <title>The draft genome of the transgenic tropical fruit tree papaya (Carica papaya Linnaeus).</title>
        <authorList>
            <person name="Ming R."/>
            <person name="Hou S."/>
            <person name="Feng Y."/>
            <person name="Yu Q."/>
            <person name="Dionne-Laporte A."/>
            <person name="Saw J.H."/>
            <person name="Senin P."/>
            <person name="Wang W."/>
            <person name="Ly B.V."/>
            <person name="Lewis K.L."/>
            <person name="Salzberg S.L."/>
            <person name="Feng L."/>
            <person name="Jones M.R."/>
            <person name="Skelton R.L."/>
            <person name="Murray J.E."/>
            <person name="Chen C."/>
            <person name="Qian W."/>
            <person name="Shen J."/>
            <person name="Du P."/>
            <person name="Eustice M."/>
            <person name="Tong E."/>
            <person name="Tang H."/>
            <person name="Lyons E."/>
            <person name="Paull R.E."/>
            <person name="Michael T.P."/>
            <person name="Wall K."/>
            <person name="Rice D.W."/>
            <person name="Albert H."/>
            <person name="Wang M.L."/>
            <person name="Zhu Y.J."/>
            <person name="Schatz M."/>
            <person name="Nagarajan N."/>
            <person name="Acob R.A."/>
            <person name="Guan P."/>
            <person name="Blas A."/>
            <person name="Wai C.M."/>
            <person name="Ackerman C.M."/>
            <person name="Ren Y."/>
            <person name="Liu C."/>
            <person name="Wang J."/>
            <person name="Wang J."/>
            <person name="Na J.K."/>
            <person name="Shakirov E.V."/>
            <person name="Haas B."/>
            <person name="Thimmapuram J."/>
            <person name="Nelson D."/>
            <person name="Wang X."/>
            <person name="Bowers J.E."/>
            <person name="Gschwend A.R."/>
            <person name="Delcher A.L."/>
            <person name="Singh R."/>
            <person name="Suzuki J.Y."/>
            <person name="Tripathi S."/>
            <person name="Neupane K."/>
            <person name="Wei H."/>
            <person name="Irikura B."/>
            <person name="Paidi M."/>
            <person name="Jiang N."/>
            <person name="Zhang W."/>
            <person name="Presting G."/>
            <person name="Windsor A."/>
            <person name="Navajas-Perez R."/>
            <person name="Torres M.J."/>
            <person name="Feltus F.A."/>
            <person name="Porter B."/>
            <person name="Li Y."/>
            <person name="Burroughs A.M."/>
            <person name="Luo M.C."/>
            <person name="Liu L."/>
            <person name="Christopher D.A."/>
            <person name="Mount S.M."/>
            <person name="Moore P.H."/>
            <person name="Sugimura T."/>
            <person name="Jiang J."/>
            <person name="Schuler M.A."/>
            <person name="Friedman V."/>
            <person name="Mitchell-Olds T."/>
            <person name="Shippen D.E."/>
            <person name="dePamphilis C.W."/>
            <person name="Palmer J.D."/>
            <person name="Freeling M."/>
            <person name="Paterson A.H."/>
            <person name="Gonsalves D."/>
            <person name="Wang L."/>
            <person name="Alam M."/>
        </authorList>
    </citation>
    <scope>NUCLEOTIDE SEQUENCE [LARGE SCALE GENOMIC DNA]</scope>
    <source>
        <strain>cv. SunUp</strain>
    </source>
</reference>
<sequence>MKIRASVRKICEKCRLIRRRGRIIVICSNPRHKQRQG</sequence>
<dbReference type="EMBL" id="EU431223">
    <property type="protein sequence ID" value="ABY86817.1"/>
    <property type="molecule type" value="Genomic_DNA"/>
</dbReference>
<dbReference type="RefSeq" id="YP_001671717.1">
    <property type="nucleotide sequence ID" value="NC_010323.1"/>
</dbReference>
<dbReference type="SMR" id="B1A969"/>
<dbReference type="GeneID" id="5878340"/>
<dbReference type="KEGG" id="cpap:5878340"/>
<dbReference type="GO" id="GO:0009507">
    <property type="term" value="C:chloroplast"/>
    <property type="evidence" value="ECO:0007669"/>
    <property type="project" value="UniProtKB-SubCell"/>
</dbReference>
<dbReference type="GO" id="GO:1990904">
    <property type="term" value="C:ribonucleoprotein complex"/>
    <property type="evidence" value="ECO:0007669"/>
    <property type="project" value="UniProtKB-KW"/>
</dbReference>
<dbReference type="GO" id="GO:0005840">
    <property type="term" value="C:ribosome"/>
    <property type="evidence" value="ECO:0007669"/>
    <property type="project" value="UniProtKB-KW"/>
</dbReference>
<dbReference type="GO" id="GO:0003735">
    <property type="term" value="F:structural constituent of ribosome"/>
    <property type="evidence" value="ECO:0007669"/>
    <property type="project" value="InterPro"/>
</dbReference>
<dbReference type="GO" id="GO:0006412">
    <property type="term" value="P:translation"/>
    <property type="evidence" value="ECO:0007669"/>
    <property type="project" value="UniProtKB-UniRule"/>
</dbReference>
<dbReference type="HAMAP" id="MF_00251">
    <property type="entry name" value="Ribosomal_bL36"/>
    <property type="match status" value="1"/>
</dbReference>
<dbReference type="InterPro" id="IPR000473">
    <property type="entry name" value="Ribosomal_bL36"/>
</dbReference>
<dbReference type="InterPro" id="IPR035977">
    <property type="entry name" value="Ribosomal_bL36_sp"/>
</dbReference>
<dbReference type="NCBIfam" id="TIGR01022">
    <property type="entry name" value="rpmJ_bact"/>
    <property type="match status" value="1"/>
</dbReference>
<dbReference type="PANTHER" id="PTHR42888">
    <property type="entry name" value="50S RIBOSOMAL PROTEIN L36, CHLOROPLASTIC"/>
    <property type="match status" value="1"/>
</dbReference>
<dbReference type="PANTHER" id="PTHR42888:SF1">
    <property type="entry name" value="LARGE RIBOSOMAL SUBUNIT PROTEIN BL36C"/>
    <property type="match status" value="1"/>
</dbReference>
<dbReference type="Pfam" id="PF00444">
    <property type="entry name" value="Ribosomal_L36"/>
    <property type="match status" value="1"/>
</dbReference>
<dbReference type="SUPFAM" id="SSF57840">
    <property type="entry name" value="Ribosomal protein L36"/>
    <property type="match status" value="1"/>
</dbReference>
<dbReference type="PROSITE" id="PS00828">
    <property type="entry name" value="RIBOSOMAL_L36"/>
    <property type="match status" value="1"/>
</dbReference>
<organism>
    <name type="scientific">Carica papaya</name>
    <name type="common">Papaya</name>
    <dbReference type="NCBI Taxonomy" id="3649"/>
    <lineage>
        <taxon>Eukaryota</taxon>
        <taxon>Viridiplantae</taxon>
        <taxon>Streptophyta</taxon>
        <taxon>Embryophyta</taxon>
        <taxon>Tracheophyta</taxon>
        <taxon>Spermatophyta</taxon>
        <taxon>Magnoliopsida</taxon>
        <taxon>eudicotyledons</taxon>
        <taxon>Gunneridae</taxon>
        <taxon>Pentapetalae</taxon>
        <taxon>rosids</taxon>
        <taxon>malvids</taxon>
        <taxon>Brassicales</taxon>
        <taxon>Caricaceae</taxon>
        <taxon>Carica</taxon>
    </lineage>
</organism>
<accession>B1A969</accession>
<name>RK36_CARPA</name>
<evidence type="ECO:0000255" key="1">
    <source>
        <dbReference type="HAMAP-Rule" id="MF_00251"/>
    </source>
</evidence>
<evidence type="ECO:0000305" key="2"/>
<gene>
    <name evidence="1" type="primary">rpl36</name>
</gene>
<keyword id="KW-0150">Chloroplast</keyword>
<keyword id="KW-0934">Plastid</keyword>
<keyword id="KW-0687">Ribonucleoprotein</keyword>
<keyword id="KW-0689">Ribosomal protein</keyword>
<geneLocation type="chloroplast"/>
<comment type="subcellular location">
    <subcellularLocation>
        <location>Plastid</location>
        <location>Chloroplast</location>
    </subcellularLocation>
</comment>
<comment type="similarity">
    <text evidence="1">Belongs to the bacterial ribosomal protein bL36 family.</text>
</comment>